<protein>
    <recommendedName>
        <fullName evidence="1">Large ribosomal subunit protein uL18</fullName>
    </recommendedName>
    <alternativeName>
        <fullName evidence="3">50S ribosomal protein L18</fullName>
    </alternativeName>
</protein>
<evidence type="ECO:0000255" key="1">
    <source>
        <dbReference type="HAMAP-Rule" id="MF_01337"/>
    </source>
</evidence>
<evidence type="ECO:0000256" key="2">
    <source>
        <dbReference type="SAM" id="MobiDB-lite"/>
    </source>
</evidence>
<evidence type="ECO:0000305" key="3"/>
<reference key="1">
    <citation type="journal article" date="2001" name="Science">
        <title>Comparative genomics of Listeria species.</title>
        <authorList>
            <person name="Glaser P."/>
            <person name="Frangeul L."/>
            <person name="Buchrieser C."/>
            <person name="Rusniok C."/>
            <person name="Amend A."/>
            <person name="Baquero F."/>
            <person name="Berche P."/>
            <person name="Bloecker H."/>
            <person name="Brandt P."/>
            <person name="Chakraborty T."/>
            <person name="Charbit A."/>
            <person name="Chetouani F."/>
            <person name="Couve E."/>
            <person name="de Daruvar A."/>
            <person name="Dehoux P."/>
            <person name="Domann E."/>
            <person name="Dominguez-Bernal G."/>
            <person name="Duchaud E."/>
            <person name="Durant L."/>
            <person name="Dussurget O."/>
            <person name="Entian K.-D."/>
            <person name="Fsihi H."/>
            <person name="Garcia-del Portillo F."/>
            <person name="Garrido P."/>
            <person name="Gautier L."/>
            <person name="Goebel W."/>
            <person name="Gomez-Lopez N."/>
            <person name="Hain T."/>
            <person name="Hauf J."/>
            <person name="Jackson D."/>
            <person name="Jones L.-M."/>
            <person name="Kaerst U."/>
            <person name="Kreft J."/>
            <person name="Kuhn M."/>
            <person name="Kunst F."/>
            <person name="Kurapkat G."/>
            <person name="Madueno E."/>
            <person name="Maitournam A."/>
            <person name="Mata Vicente J."/>
            <person name="Ng E."/>
            <person name="Nedjari H."/>
            <person name="Nordsiek G."/>
            <person name="Novella S."/>
            <person name="de Pablos B."/>
            <person name="Perez-Diaz J.-C."/>
            <person name="Purcell R."/>
            <person name="Remmel B."/>
            <person name="Rose M."/>
            <person name="Schlueter T."/>
            <person name="Simoes N."/>
            <person name="Tierrez A."/>
            <person name="Vazquez-Boland J.-A."/>
            <person name="Voss H."/>
            <person name="Wehland J."/>
            <person name="Cossart P."/>
        </authorList>
    </citation>
    <scope>NUCLEOTIDE SEQUENCE [LARGE SCALE GENOMIC DNA]</scope>
    <source>
        <strain>ATCC BAA-680 / CLIP 11262</strain>
    </source>
</reference>
<keyword id="KW-0687">Ribonucleoprotein</keyword>
<keyword id="KW-0689">Ribosomal protein</keyword>
<keyword id="KW-0694">RNA-binding</keyword>
<keyword id="KW-0699">rRNA-binding</keyword>
<name>RL18_LISIN</name>
<comment type="function">
    <text evidence="1">This is one of the proteins that bind and probably mediate the attachment of the 5S RNA into the large ribosomal subunit, where it forms part of the central protuberance.</text>
</comment>
<comment type="subunit">
    <text evidence="1">Part of the 50S ribosomal subunit; part of the 5S rRNA/L5/L18/L25 subcomplex. Contacts the 5S and 23S rRNAs.</text>
</comment>
<comment type="similarity">
    <text evidence="1">Belongs to the universal ribosomal protein uL18 family.</text>
</comment>
<dbReference type="EMBL" id="AL596173">
    <property type="protein sequence ID" value="CAC97991.1"/>
    <property type="molecule type" value="Genomic_DNA"/>
</dbReference>
<dbReference type="PIR" id="AG1777">
    <property type="entry name" value="AG1777"/>
</dbReference>
<dbReference type="RefSeq" id="WP_003764129.1">
    <property type="nucleotide sequence ID" value="NC_003212.1"/>
</dbReference>
<dbReference type="SMR" id="Q927M3"/>
<dbReference type="STRING" id="272626.gene:17567152"/>
<dbReference type="GeneID" id="93236038"/>
<dbReference type="KEGG" id="lin:rplR"/>
<dbReference type="eggNOG" id="COG0256">
    <property type="taxonomic scope" value="Bacteria"/>
</dbReference>
<dbReference type="HOGENOM" id="CLU_098841_0_1_9"/>
<dbReference type="OrthoDB" id="9810939at2"/>
<dbReference type="Proteomes" id="UP000002513">
    <property type="component" value="Chromosome"/>
</dbReference>
<dbReference type="GO" id="GO:0022625">
    <property type="term" value="C:cytosolic large ribosomal subunit"/>
    <property type="evidence" value="ECO:0007669"/>
    <property type="project" value="TreeGrafter"/>
</dbReference>
<dbReference type="GO" id="GO:0008097">
    <property type="term" value="F:5S rRNA binding"/>
    <property type="evidence" value="ECO:0007669"/>
    <property type="project" value="TreeGrafter"/>
</dbReference>
<dbReference type="GO" id="GO:0003735">
    <property type="term" value="F:structural constituent of ribosome"/>
    <property type="evidence" value="ECO:0007669"/>
    <property type="project" value="InterPro"/>
</dbReference>
<dbReference type="GO" id="GO:0006412">
    <property type="term" value="P:translation"/>
    <property type="evidence" value="ECO:0007669"/>
    <property type="project" value="UniProtKB-UniRule"/>
</dbReference>
<dbReference type="CDD" id="cd00432">
    <property type="entry name" value="Ribosomal_L18_L5e"/>
    <property type="match status" value="1"/>
</dbReference>
<dbReference type="FunFam" id="3.30.420.100:FF:000001">
    <property type="entry name" value="50S ribosomal protein L18"/>
    <property type="match status" value="1"/>
</dbReference>
<dbReference type="Gene3D" id="3.30.420.100">
    <property type="match status" value="1"/>
</dbReference>
<dbReference type="HAMAP" id="MF_01337_B">
    <property type="entry name" value="Ribosomal_uL18_B"/>
    <property type="match status" value="1"/>
</dbReference>
<dbReference type="InterPro" id="IPR004389">
    <property type="entry name" value="Ribosomal_uL18_bac-type"/>
</dbReference>
<dbReference type="InterPro" id="IPR005484">
    <property type="entry name" value="Ribosomal_uL18_bac/euk"/>
</dbReference>
<dbReference type="NCBIfam" id="TIGR00060">
    <property type="entry name" value="L18_bact"/>
    <property type="match status" value="1"/>
</dbReference>
<dbReference type="PANTHER" id="PTHR12899">
    <property type="entry name" value="39S RIBOSOMAL PROTEIN L18, MITOCHONDRIAL"/>
    <property type="match status" value="1"/>
</dbReference>
<dbReference type="PANTHER" id="PTHR12899:SF3">
    <property type="entry name" value="LARGE RIBOSOMAL SUBUNIT PROTEIN UL18M"/>
    <property type="match status" value="1"/>
</dbReference>
<dbReference type="Pfam" id="PF00861">
    <property type="entry name" value="Ribosomal_L18p"/>
    <property type="match status" value="1"/>
</dbReference>
<dbReference type="SUPFAM" id="SSF53137">
    <property type="entry name" value="Translational machinery components"/>
    <property type="match status" value="1"/>
</dbReference>
<feature type="chain" id="PRO_0000131287" description="Large ribosomal subunit protein uL18">
    <location>
        <begin position="1"/>
        <end position="119"/>
    </location>
</feature>
<feature type="region of interest" description="Disordered" evidence="2">
    <location>
        <begin position="1"/>
        <end position="25"/>
    </location>
</feature>
<feature type="compositionally biased region" description="Basic residues" evidence="2">
    <location>
        <begin position="9"/>
        <end position="20"/>
    </location>
</feature>
<organism>
    <name type="scientific">Listeria innocua serovar 6a (strain ATCC BAA-680 / CLIP 11262)</name>
    <dbReference type="NCBI Taxonomy" id="272626"/>
    <lineage>
        <taxon>Bacteria</taxon>
        <taxon>Bacillati</taxon>
        <taxon>Bacillota</taxon>
        <taxon>Bacilli</taxon>
        <taxon>Bacillales</taxon>
        <taxon>Listeriaceae</taxon>
        <taxon>Listeria</taxon>
    </lineage>
</organism>
<gene>
    <name evidence="1" type="primary">rplR</name>
    <name type="ordered locus">lin2765</name>
</gene>
<proteinExistence type="inferred from homology"/>
<accession>Q927M3</accession>
<sequence length="119" mass="13082">MITKIDKNKVRKKRHARVRSKISGTESRPRLNVFRSNKNIYAQVIDDVNGVTLASASNLDKDFGSAESKVDAASKVGELVAKRASEKGITSVTFDRGGYLYHGRVKALAEAARENGLEF</sequence>